<name>Y488_METJA</name>
<organism>
    <name type="scientific">Methanocaldococcus jannaschii (strain ATCC 43067 / DSM 2661 / JAL-1 / JCM 10045 / NBRC 100440)</name>
    <name type="common">Methanococcus jannaschii</name>
    <dbReference type="NCBI Taxonomy" id="243232"/>
    <lineage>
        <taxon>Archaea</taxon>
        <taxon>Methanobacteriati</taxon>
        <taxon>Methanobacteriota</taxon>
        <taxon>Methanomada group</taxon>
        <taxon>Methanococci</taxon>
        <taxon>Methanococcales</taxon>
        <taxon>Methanocaldococcaceae</taxon>
        <taxon>Methanocaldococcus</taxon>
    </lineage>
</organism>
<reference key="1">
    <citation type="journal article" date="1996" name="Science">
        <title>Complete genome sequence of the methanogenic archaeon, Methanococcus jannaschii.</title>
        <authorList>
            <person name="Bult C.J."/>
            <person name="White O."/>
            <person name="Olsen G.J."/>
            <person name="Zhou L."/>
            <person name="Fleischmann R.D."/>
            <person name="Sutton G.G."/>
            <person name="Blake J.A."/>
            <person name="FitzGerald L.M."/>
            <person name="Clayton R.A."/>
            <person name="Gocayne J.D."/>
            <person name="Kerlavage A.R."/>
            <person name="Dougherty B.A."/>
            <person name="Tomb J.-F."/>
            <person name="Adams M.D."/>
            <person name="Reich C.I."/>
            <person name="Overbeek R."/>
            <person name="Kirkness E.F."/>
            <person name="Weinstock K.G."/>
            <person name="Merrick J.M."/>
            <person name="Glodek A."/>
            <person name="Scott J.L."/>
            <person name="Geoghagen N.S.M."/>
            <person name="Weidman J.F."/>
            <person name="Fuhrmann J.L."/>
            <person name="Nguyen D."/>
            <person name="Utterback T.R."/>
            <person name="Kelley J.M."/>
            <person name="Peterson J.D."/>
            <person name="Sadow P.W."/>
            <person name="Hanna M.C."/>
            <person name="Cotton M.D."/>
            <person name="Roberts K.M."/>
            <person name="Hurst M.A."/>
            <person name="Kaine B.P."/>
            <person name="Borodovsky M."/>
            <person name="Klenk H.-P."/>
            <person name="Fraser C.M."/>
            <person name="Smith H.O."/>
            <person name="Woese C.R."/>
            <person name="Venter J.C."/>
        </authorList>
    </citation>
    <scope>NUCLEOTIDE SEQUENCE [LARGE SCALE GENOMIC DNA]</scope>
    <source>
        <strain>ATCC 43067 / DSM 2661 / JAL-1 / JCM 10045 / NBRC 100440</strain>
    </source>
</reference>
<proteinExistence type="evidence at protein level"/>
<keyword id="KW-0002">3D-structure</keyword>
<keyword id="KW-1185">Reference proteome</keyword>
<feature type="chain" id="PRO_0000106894" description="Uncharacterized protein MJ0488">
    <location>
        <begin position="1"/>
        <end position="158"/>
    </location>
</feature>
<feature type="helix" evidence="1">
    <location>
        <begin position="4"/>
        <end position="17"/>
    </location>
</feature>
<feature type="helix" evidence="1">
    <location>
        <begin position="25"/>
        <end position="36"/>
    </location>
</feature>
<feature type="strand" evidence="1">
    <location>
        <begin position="39"/>
        <end position="44"/>
    </location>
</feature>
<feature type="helix" evidence="1">
    <location>
        <begin position="48"/>
        <end position="58"/>
    </location>
</feature>
<feature type="turn" evidence="1">
    <location>
        <begin position="59"/>
        <end position="61"/>
    </location>
</feature>
<feature type="strand" evidence="1">
    <location>
        <begin position="65"/>
        <end position="68"/>
    </location>
</feature>
<feature type="helix" evidence="1">
    <location>
        <begin position="73"/>
        <end position="78"/>
    </location>
</feature>
<feature type="strand" evidence="1">
    <location>
        <begin position="79"/>
        <end position="81"/>
    </location>
</feature>
<feature type="helix" evidence="1">
    <location>
        <begin position="82"/>
        <end position="93"/>
    </location>
</feature>
<feature type="strand" evidence="1">
    <location>
        <begin position="97"/>
        <end position="104"/>
    </location>
</feature>
<feature type="strand" evidence="1">
    <location>
        <begin position="112"/>
        <end position="118"/>
    </location>
</feature>
<feature type="strand" evidence="1">
    <location>
        <begin position="123"/>
        <end position="129"/>
    </location>
</feature>
<feature type="helix" evidence="1">
    <location>
        <begin position="132"/>
        <end position="135"/>
    </location>
</feature>
<feature type="helix" evidence="1">
    <location>
        <begin position="139"/>
        <end position="152"/>
    </location>
</feature>
<feature type="turn" evidence="1">
    <location>
        <begin position="153"/>
        <end position="155"/>
    </location>
</feature>
<accession>Q57912</accession>
<evidence type="ECO:0007829" key="1">
    <source>
        <dbReference type="PDB" id="3WB0"/>
    </source>
</evidence>
<protein>
    <recommendedName>
        <fullName>Uncharacterized protein MJ0488</fullName>
    </recommendedName>
</protein>
<dbReference type="EMBL" id="L77117">
    <property type="protein sequence ID" value="AAB98479.1"/>
    <property type="molecule type" value="Genomic_DNA"/>
</dbReference>
<dbReference type="PIR" id="H64360">
    <property type="entry name" value="H64360"/>
</dbReference>
<dbReference type="PDB" id="3WB0">
    <property type="method" value="X-ray"/>
    <property type="resolution" value="1.91 A"/>
    <property type="chains" value="A/B/C/D=3-158"/>
</dbReference>
<dbReference type="PDB" id="3WB1">
    <property type="method" value="X-ray"/>
    <property type="resolution" value="2.40 A"/>
    <property type="chains" value="A/B/C/D=3-158"/>
</dbReference>
<dbReference type="PDB" id="3WB2">
    <property type="method" value="X-ray"/>
    <property type="resolution" value="2.44 A"/>
    <property type="chains" value="A/B/C/D=3-158"/>
</dbReference>
<dbReference type="PDB" id="5D5Q">
    <property type="method" value="X-ray"/>
    <property type="resolution" value="2.50 A"/>
    <property type="chains" value="A/B/C/D=1-158"/>
</dbReference>
<dbReference type="PDBsum" id="3WB0"/>
<dbReference type="PDBsum" id="3WB1"/>
<dbReference type="PDBsum" id="3WB2"/>
<dbReference type="PDBsum" id="5D5Q"/>
<dbReference type="SMR" id="Q57912"/>
<dbReference type="STRING" id="243232.MJ_0488"/>
<dbReference type="PaxDb" id="243232-MJ_0488"/>
<dbReference type="EnsemblBacteria" id="AAB98479">
    <property type="protein sequence ID" value="AAB98479"/>
    <property type="gene ID" value="MJ_0488"/>
</dbReference>
<dbReference type="KEGG" id="mja:MJ_0488"/>
<dbReference type="eggNOG" id="arCOG04863">
    <property type="taxonomic scope" value="Archaea"/>
</dbReference>
<dbReference type="HOGENOM" id="CLU_1691544_0_0_2"/>
<dbReference type="InParanoid" id="Q57912"/>
<dbReference type="EvolutionaryTrace" id="Q57912"/>
<dbReference type="Proteomes" id="UP000000805">
    <property type="component" value="Chromosome"/>
</dbReference>
<dbReference type="Gene3D" id="3.40.50.10150">
    <property type="entry name" value="B12-dependent dehydatase associated subunit"/>
    <property type="match status" value="1"/>
</dbReference>
<dbReference type="Gene3D" id="1.10.287.470">
    <property type="entry name" value="Helix hairpin bin"/>
    <property type="match status" value="1"/>
</dbReference>
<dbReference type="InterPro" id="IPR010254">
    <property type="entry name" value="B12-dep_deHydtase_bsu"/>
</dbReference>
<dbReference type="InterPro" id="IPR012019">
    <property type="entry name" value="HcgB"/>
</dbReference>
<dbReference type="Pfam" id="PF11576">
    <property type="entry name" value="HcgB"/>
    <property type="match status" value="1"/>
</dbReference>
<dbReference type="PIRSF" id="PIRSF005018">
    <property type="entry name" value="UCP005018"/>
    <property type="match status" value="1"/>
</dbReference>
<sequence>MIVMEEIIKKAFIESINNIRRGDKEEELKKIQEKIVNAKKIVVATNNQKKFKVIRDIMLRVCNAEIKMLDIDTRFADLTRMPALTKGLIALDIEKADLYIARGRLGAPGSGSMLVILDEKGRVLTASLSPSSVIHKEDIEERIKKELIEALSRIGISI</sequence>
<gene>
    <name type="ordered locus">MJ0488</name>
</gene>